<reference key="1">
    <citation type="journal article" date="2000" name="Microbiology">
        <title>Genes for the synthesis of the osmoprotectant glycine betaine from choline in the moderately halophilic bacterium Halomonas elongata DSM 3043.</title>
        <authorList>
            <person name="Canovas D."/>
            <person name="Vargas C."/>
            <person name="Kneip S."/>
            <person name="Moron M.J."/>
            <person name="Ventosa A."/>
            <person name="Bremer E."/>
            <person name="Nieto J.J."/>
        </authorList>
    </citation>
    <scope>NUCLEOTIDE SEQUENCE [GENOMIC DNA]</scope>
</reference>
<sequence>MQQLSKRRLSALFVTAFLPVTAFASECSSVRFAEVGWTDITVTTALASEVLEALGYEPRVDTVSVPIAYAGIRNNDFDVFLGNWMPSMASISDPYIERGEVERLVANLEGAKYTLAVPQYVYDAGVTSVNDLAEHADQFEQRIHGIEAGNDGNEL</sequence>
<protein>
    <recommendedName>
        <fullName>Uncharacterized protein ORF1</fullName>
    </recommendedName>
</protein>
<feature type="signal peptide" evidence="1">
    <location>
        <begin position="1"/>
        <end position="24"/>
    </location>
</feature>
<feature type="chain" id="PRO_0000308897" description="Uncharacterized protein ORF1">
    <location>
        <begin position="25"/>
        <end position="155"/>
    </location>
</feature>
<feature type="non-terminal residue">
    <location>
        <position position="155"/>
    </location>
</feature>
<dbReference type="EMBL" id="AJ238780">
    <property type="protein sequence ID" value="CAB77173.1"/>
    <property type="molecule type" value="Genomic_DNA"/>
</dbReference>
<dbReference type="SMR" id="Q9L4K3"/>
<dbReference type="GO" id="GO:0043190">
    <property type="term" value="C:ATP-binding cassette (ABC) transporter complex"/>
    <property type="evidence" value="ECO:0007669"/>
    <property type="project" value="InterPro"/>
</dbReference>
<dbReference type="GO" id="GO:0022857">
    <property type="term" value="F:transmembrane transporter activity"/>
    <property type="evidence" value="ECO:0007669"/>
    <property type="project" value="InterPro"/>
</dbReference>
<dbReference type="Gene3D" id="3.10.105.10">
    <property type="entry name" value="Dipeptide-binding Protein, Domain 3"/>
    <property type="match status" value="1"/>
</dbReference>
<dbReference type="Gene3D" id="3.40.190.100">
    <property type="entry name" value="Glycine betaine-binding periplasmic protein, domain 2"/>
    <property type="match status" value="1"/>
</dbReference>
<dbReference type="InterPro" id="IPR007210">
    <property type="entry name" value="ABC_Gly_betaine_transp_sub-bd"/>
</dbReference>
<dbReference type="Pfam" id="PF04069">
    <property type="entry name" value="OpuAC"/>
    <property type="match status" value="1"/>
</dbReference>
<dbReference type="SUPFAM" id="SSF53850">
    <property type="entry name" value="Periplasmic binding protein-like II"/>
    <property type="match status" value="1"/>
</dbReference>
<keyword id="KW-0732">Signal</keyword>
<organism>
    <name type="scientific">Chromohalobacter salexigens (strain ATCC BAA-138 / DSM 3043 / CIP 106854 / NCIMB 13768 / 1H11)</name>
    <dbReference type="NCBI Taxonomy" id="290398"/>
    <lineage>
        <taxon>Bacteria</taxon>
        <taxon>Pseudomonadati</taxon>
        <taxon>Pseudomonadota</taxon>
        <taxon>Gammaproteobacteria</taxon>
        <taxon>Oceanospirillales</taxon>
        <taxon>Halomonadaceae</taxon>
        <taxon>Chromohalobacter</taxon>
    </lineage>
</organism>
<proteinExistence type="inferred from homology"/>
<evidence type="ECO:0000255" key="1"/>
<accession>Q9L4K3</accession>
<name>ORF1_CHRSD</name>